<protein>
    <recommendedName>
        <fullName>Endogenous retrovirus group K member 9 Env polyprotein</fullName>
    </recommendedName>
    <alternativeName>
        <fullName>EnvK4 protein</fullName>
    </alternativeName>
    <alternativeName>
        <fullName>Envelope polyprotein</fullName>
    </alternativeName>
    <alternativeName>
        <fullName>HERV-K(C6) envelope protein</fullName>
    </alternativeName>
    <alternativeName>
        <fullName>HERV-K109 envelope protein</fullName>
    </alternativeName>
    <alternativeName>
        <fullName>HERV-K_6q14.1 provirus ancestral Env polyprotein</fullName>
    </alternativeName>
    <component>
        <recommendedName>
            <fullName>Surface protein</fullName>
            <shortName>SU</shortName>
        </recommendedName>
    </component>
    <component>
        <recommendedName>
            <fullName>Transmembrane protein</fullName>
            <shortName>TM</shortName>
        </recommendedName>
    </component>
</protein>
<sequence length="698" mass="79016">MNPSEMQRKAPPRRRRHRNRAPLTHKMNKMVTSEEQMKLPSTKKAEPPTWAQLKKLTQLATKYLENTKVTQTPESMLLAALMIVSMVVSLPMPAGAAAANYTNWAYVPFPPLIRAVTWMDNPIEVYVNDSVWVPGPIDDRCPAKPEEEGMMINISIGYRYPICLGRAPGCLMPAVQNWLVEVPIVSPICRFTYHMVSGMSLRPRVNYLQDFSYQRSLKFRPKGKPCPKEIPKESKNTEVLVWEECVANSAVILQNNEFGTIIDWTPQGQFYHNCSGQTQSCPSAQVSPAVDSDLTESLDKHKHKKLQSFYPWEWGEKGISTPRPKIISPVSGPEHPELWRLTVASHHIRIWSGNQTLETRDRKPFYTVDLNSSLTLPLQSCVKPPYMLVVGNIVIKPDSQTITCENCRLLTCIDSTFNWQHRILLVRAREGVWIPVSMDRPWEASPSIHILTEVLKGVLNRSKRFIFTLIAVIMGLIAVTATAAVAGVALHSSVQSVNFVNDGQKNSTRLWNSQSSIDQKLANQINDLRQTVIWMGDRLMSLEHRFQLQCDWNTSDFCITPQIYNESEHHWDMVRRHLQGREDNLTLDISKLKEQIFEASKAHLNLVPGTEAIAGVADGLANLNPVTWVKTIGSTTIINLILILVCLFCLLLVCRCTQQLRRDSDHRERAMMTMAVLSKRKGGNVGKSKRDQIVTVSV</sequence>
<gene>
    <name type="primary">ERVK-9</name>
</gene>
<keyword id="KW-1003">Cell membrane</keyword>
<keyword id="KW-0165">Cleavage on pair of basic residues</keyword>
<keyword id="KW-1015">Disulfide bond</keyword>
<keyword id="KW-0895">ERV</keyword>
<keyword id="KW-0325">Glycoprotein</keyword>
<keyword id="KW-0472">Membrane</keyword>
<keyword id="KW-1185">Reference proteome</keyword>
<keyword id="KW-0732">Signal</keyword>
<keyword id="KW-0812">Transmembrane</keyword>
<keyword id="KW-1133">Transmembrane helix</keyword>
<keyword id="KW-0814">Transposable element</keyword>
<keyword id="KW-0261">Viral envelope protein</keyword>
<keyword id="KW-0946">Virion</keyword>
<proteinExistence type="evidence at protein level"/>
<dbReference type="EMBL" id="AF164615">
    <property type="protein sequence ID" value="AAD51800.1"/>
    <property type="molecule type" value="Genomic_DNA"/>
</dbReference>
<dbReference type="IntAct" id="Q9UKH3">
    <property type="interactions" value="1"/>
</dbReference>
<dbReference type="GlyCosmos" id="Q9UKH3">
    <property type="glycosylation" value="11 sites, No reported glycans"/>
</dbReference>
<dbReference type="iPTMnet" id="Q9UKH3"/>
<dbReference type="PhosphoSitePlus" id="Q9UKH3"/>
<dbReference type="BioMuta" id="HGNC:39005"/>
<dbReference type="jPOST" id="Q9UKH3"/>
<dbReference type="MassIVE" id="Q9UKH3"/>
<dbReference type="PeptideAtlas" id="Q9UKH3"/>
<dbReference type="GeneCards" id="ERVK-9"/>
<dbReference type="HGNC" id="HGNC:39005">
    <property type="gene designation" value="ERVK-9"/>
</dbReference>
<dbReference type="neXtProt" id="NX_Q9UKH3"/>
<dbReference type="PhylomeDB" id="Q9UKH3"/>
<dbReference type="Pharos" id="Q9UKH3">
    <property type="development level" value="Tdark"/>
</dbReference>
<dbReference type="Proteomes" id="UP000005640">
    <property type="component" value="Unplaced"/>
</dbReference>
<dbReference type="GO" id="GO:0005886">
    <property type="term" value="C:plasma membrane"/>
    <property type="evidence" value="ECO:0007669"/>
    <property type="project" value="UniProtKB-SubCell"/>
</dbReference>
<dbReference type="GO" id="GO:0005198">
    <property type="term" value="F:structural molecule activity"/>
    <property type="evidence" value="ECO:0007669"/>
    <property type="project" value="InterPro"/>
</dbReference>
<dbReference type="CDD" id="cd09909">
    <property type="entry name" value="HIV-1-like_HR1-HR2"/>
    <property type="match status" value="1"/>
</dbReference>
<dbReference type="InterPro" id="IPR000328">
    <property type="entry name" value="GP41-like"/>
</dbReference>
<dbReference type="InterPro" id="IPR029104">
    <property type="entry name" value="HERV-K_env"/>
</dbReference>
<dbReference type="InterPro" id="IPR051255">
    <property type="entry name" value="Retroviral_env_glycoprotein"/>
</dbReference>
<dbReference type="PANTHER" id="PTHR34313">
    <property type="entry name" value="ENDOGENOUS RETROVIRUS GROUP K MEMBER 113 ENV POLYPROTEIN-RELATED"/>
    <property type="match status" value="1"/>
</dbReference>
<dbReference type="PANTHER" id="PTHR34313:SF3">
    <property type="entry name" value="ENDOGENOUS RETROVIRUS GROUP K MEMBER 113 ENV POLYPROTEIN-RELATED"/>
    <property type="match status" value="1"/>
</dbReference>
<dbReference type="Pfam" id="PF00517">
    <property type="entry name" value="GP41"/>
    <property type="match status" value="1"/>
</dbReference>
<dbReference type="Pfam" id="PF13804">
    <property type="entry name" value="HERV-K_env_2"/>
    <property type="match status" value="1"/>
</dbReference>
<dbReference type="Pfam" id="PF15695">
    <property type="entry name" value="HERV-K_REC"/>
    <property type="match status" value="1"/>
</dbReference>
<evidence type="ECO:0000250" key="1"/>
<evidence type="ECO:0000255" key="2"/>
<evidence type="ECO:0000256" key="3">
    <source>
        <dbReference type="SAM" id="MobiDB-lite"/>
    </source>
</evidence>
<evidence type="ECO:0000269" key="4">
    <source>
    </source>
</evidence>
<evidence type="ECO:0000305" key="5"/>
<name>ENK9_HUMAN</name>
<accession>Q9UKH3</accession>
<organism>
    <name type="scientific">Homo sapiens</name>
    <name type="common">Human</name>
    <dbReference type="NCBI Taxonomy" id="9606"/>
    <lineage>
        <taxon>Eukaryota</taxon>
        <taxon>Metazoa</taxon>
        <taxon>Chordata</taxon>
        <taxon>Craniata</taxon>
        <taxon>Vertebrata</taxon>
        <taxon>Euteleostomi</taxon>
        <taxon>Mammalia</taxon>
        <taxon>Eutheria</taxon>
        <taxon>Euarchontoglires</taxon>
        <taxon>Primates</taxon>
        <taxon>Haplorrhini</taxon>
        <taxon>Catarrhini</taxon>
        <taxon>Hominidae</taxon>
        <taxon>Homo</taxon>
    </lineage>
</organism>
<comment type="function">
    <text evidence="4">Retroviral envelope proteins mediate receptor recognition and membrane fusion during early infection. Endogenous envelope proteins may have kept, lost or modified their original function during evolution. This endogenous envelope protein has lost its original fusogenic properties.</text>
</comment>
<comment type="function">
    <text evidence="1">SU mediates receptor recognition.</text>
</comment>
<comment type="function">
    <text evidence="1">TM anchors the envelope heterodimer to the viral membrane through one transmembrane domain. The other hydrophobic domain, called fusion peptide, mediates fusion of the viral membrane with the target cell membrane (By similarity).</text>
</comment>
<comment type="subunit">
    <text evidence="1">The surface (SU) and transmembrane (TM) proteins form a heterodimer. SU and TM are attached by noncovalent interactions or by a labile interchain disulfide bond (By similarity).</text>
</comment>
<comment type="subcellular location">
    <molecule>Transmembrane protein</molecule>
    <subcellularLocation>
        <location evidence="1">Cell membrane</location>
        <topology evidence="1">Single-pass type I membrane protein</topology>
    </subcellularLocation>
</comment>
<comment type="subcellular location">
    <molecule>Surface protein</molecule>
    <subcellularLocation>
        <location evidence="1">Cell membrane</location>
        <topology evidence="1">Peripheral membrane protein</topology>
    </subcellularLocation>
    <text evidence="1">The surface protein is not anchored to the membrane, but localizes to the extracellular surface through its binding to TM.</text>
</comment>
<comment type="subcellular location">
    <molecule>Endogenous retrovirus group K member 9 Env polyprotein</molecule>
    <subcellularLocation>
        <location evidence="1">Virion</location>
    </subcellularLocation>
</comment>
<comment type="PTM">
    <text evidence="1">Specific enzymatic cleavages in vivo yield the mature SU and TM proteins.</text>
</comment>
<comment type="miscellaneous">
    <text>This envelope protein is encoded by a human specific provirus.</text>
</comment>
<comment type="miscellaneous">
    <text>ERVK-9 has a type 2 genome. The HERV-K(HML-2) family contains type 1 and type 2 genomes depending on the absence or presence of 292 nucleotides at the 5'-end of the env gene resulting in Env proteins of distinct sizes. Despite their overall retroviral envelope structure HERV-K(HML-2) type 1 envelope proteins lack a predictable signal sequence. Subgenomic RNA transcripts coding for full-length envelope proteins have been detected for both type of genomes.</text>
</comment>
<comment type="similarity">
    <text evidence="5">Belongs to the beta type-B retroviral envelope protein family. HERV class-II K(HML-2) env subfamily.</text>
</comment>
<reference key="1">
    <citation type="journal article" date="1999" name="Curr. Biol.">
        <title>Many human endogenous retrovirus K (HERV-K) proviruses are unique to humans.</title>
        <authorList>
            <person name="Barbulescu M."/>
            <person name="Turner G."/>
            <person name="Seaman M.I."/>
            <person name="Deinard A.S."/>
            <person name="Kidd K.K."/>
            <person name="Lenz J."/>
        </authorList>
    </citation>
    <scope>NUCLEOTIDE SEQUENCE [GENOMIC DNA]</scope>
</reference>
<reference key="2">
    <citation type="journal article" date="2003" name="J. Virol.">
        <title>Survey of human genes of retroviral origin: identification and transcriptome of the genes with coding capacity for complete envelope proteins.</title>
        <authorList>
            <person name="de Parseval N."/>
            <person name="Lazar V."/>
            <person name="Casella J.-F."/>
            <person name="Benit L."/>
            <person name="Heidmann T."/>
        </authorList>
    </citation>
    <scope>CHARACTERIZATION</scope>
</reference>
<reference key="3">
    <citation type="journal article" date="2003" name="Proc. Natl. Acad. Sci. U.S.A.">
        <title>Genomewide screening for fusogenic human endogenous retrovirus envelopes identifies syncytin 2, a gene conserved on primate evolution.</title>
        <authorList>
            <person name="Blaise S."/>
            <person name="de Parseval N."/>
            <person name="Benit L."/>
            <person name="Heidmann T."/>
        </authorList>
    </citation>
    <scope>FUNCTION</scope>
</reference>
<reference key="4">
    <citation type="journal article" date="2003" name="Oncogene">
        <title>Quantitation of HERV-K env gene expression and splicing in human breast cancer.</title>
        <authorList>
            <person name="Wang-Johanning F."/>
            <person name="Frost A.R."/>
            <person name="Jian B."/>
            <person name="Epp L."/>
            <person name="Lu D.W."/>
            <person name="Johanning G.L."/>
        </authorList>
    </citation>
    <scope>SUBGENOMIC RNA</scope>
</reference>
<feature type="signal peptide" evidence="2">
    <location>
        <begin position="1"/>
        <end position="89"/>
    </location>
</feature>
<feature type="chain" id="PRO_0000008506" description="Endogenous retrovirus group K member 9 Env polyprotein">
    <location>
        <begin position="90"/>
        <end position="698"/>
    </location>
</feature>
<feature type="chain" id="PRO_0000008507" description="Surface protein" evidence="1">
    <location>
        <begin position="90"/>
        <end position="464"/>
    </location>
</feature>
<feature type="chain" id="PRO_0000008508" description="Transmembrane protein" evidence="1">
    <location>
        <begin position="465"/>
        <end position="698"/>
    </location>
</feature>
<feature type="topological domain" description="Extracellular" evidence="2">
    <location>
        <begin position="90"/>
        <end position="631"/>
    </location>
</feature>
<feature type="transmembrane region" description="Helical" evidence="2">
    <location>
        <begin position="632"/>
        <end position="652"/>
    </location>
</feature>
<feature type="topological domain" description="Cytoplasmic" evidence="2">
    <location>
        <begin position="653"/>
        <end position="698"/>
    </location>
</feature>
<feature type="region of interest" description="Disordered" evidence="3">
    <location>
        <begin position="1"/>
        <end position="47"/>
    </location>
</feature>
<feature type="region of interest" description="Fusion peptide" evidence="2">
    <location>
        <begin position="465"/>
        <end position="485"/>
    </location>
</feature>
<feature type="compositionally biased region" description="Basic residues" evidence="3">
    <location>
        <begin position="10"/>
        <end position="20"/>
    </location>
</feature>
<feature type="site" description="Cleavage" evidence="1">
    <location>
        <begin position="464"/>
        <end position="465"/>
    </location>
</feature>
<feature type="glycosylation site" description="N-linked (GlcNAc...) asparagine" evidence="2">
    <location>
        <position position="100"/>
    </location>
</feature>
<feature type="glycosylation site" description="N-linked (GlcNAc...) asparagine" evidence="2">
    <location>
        <position position="128"/>
    </location>
</feature>
<feature type="glycosylation site" description="N-linked (GlcNAc...) asparagine" evidence="2">
    <location>
        <position position="153"/>
    </location>
</feature>
<feature type="glycosylation site" description="N-linked (GlcNAc...) asparagine" evidence="2">
    <location>
        <position position="273"/>
    </location>
</feature>
<feature type="glycosylation site" description="N-linked (GlcNAc...) asparagine" evidence="2">
    <location>
        <position position="354"/>
    </location>
</feature>
<feature type="glycosylation site" description="N-linked (GlcNAc...) asparagine" evidence="2">
    <location>
        <position position="371"/>
    </location>
</feature>
<feature type="glycosylation site" description="N-linked (GlcNAc...) asparagine" evidence="2">
    <location>
        <position position="460"/>
    </location>
</feature>
<feature type="glycosylation site" description="N-linked (GlcNAc...) asparagine" evidence="2">
    <location>
        <position position="506"/>
    </location>
</feature>
<feature type="glycosylation site" description="N-linked (GlcNAc...) asparagine" evidence="2">
    <location>
        <position position="553"/>
    </location>
</feature>
<feature type="glycosylation site" description="N-linked (GlcNAc...) asparagine" evidence="2">
    <location>
        <position position="565"/>
    </location>
</feature>
<feature type="glycosylation site" description="N-linked (GlcNAc...) asparagine" evidence="2">
    <location>
        <position position="584"/>
    </location>
</feature>